<organism>
    <name type="scientific">Drosophila yakuba</name>
    <name type="common">Fruit fly</name>
    <dbReference type="NCBI Taxonomy" id="7245"/>
    <lineage>
        <taxon>Eukaryota</taxon>
        <taxon>Metazoa</taxon>
        <taxon>Ecdysozoa</taxon>
        <taxon>Arthropoda</taxon>
        <taxon>Hexapoda</taxon>
        <taxon>Insecta</taxon>
        <taxon>Pterygota</taxon>
        <taxon>Neoptera</taxon>
        <taxon>Endopterygota</taxon>
        <taxon>Diptera</taxon>
        <taxon>Brachycera</taxon>
        <taxon>Muscomorpha</taxon>
        <taxon>Ephydroidea</taxon>
        <taxon>Drosophilidae</taxon>
        <taxon>Drosophila</taxon>
        <taxon>Sophophora</taxon>
    </lineage>
</organism>
<gene>
    <name evidence="2" type="primary">otk</name>
    <name type="ORF">GE13482</name>
</gene>
<accession>B4P5Q9</accession>
<keyword id="KW-0130">Cell adhesion</keyword>
<keyword id="KW-1003">Cell membrane</keyword>
<keyword id="KW-1015">Disulfide bond</keyword>
<keyword id="KW-0325">Glycoprotein</keyword>
<keyword id="KW-0393">Immunoglobulin domain</keyword>
<keyword id="KW-0472">Membrane</keyword>
<keyword id="KW-0524">Neurogenesis</keyword>
<keyword id="KW-0597">Phosphoprotein</keyword>
<keyword id="KW-0675">Receptor</keyword>
<keyword id="KW-0677">Repeat</keyword>
<keyword id="KW-0732">Signal</keyword>
<keyword id="KW-0812">Transmembrane</keyword>
<keyword id="KW-1133">Transmembrane helix</keyword>
<reference evidence="8" key="1">
    <citation type="journal article" date="2007" name="Nature">
        <title>Evolution of genes and genomes on the Drosophila phylogeny.</title>
        <authorList>
            <consortium name="Drosophila 12 genomes consortium"/>
        </authorList>
    </citation>
    <scope>NUCLEOTIDE SEQUENCE [LARGE SCALE GENOMIC DNA]</scope>
    <source>
        <strain evidence="8">Tai18E2 / Tucson 14021-0261.01</strain>
    </source>
</reference>
<protein>
    <recommendedName>
        <fullName evidence="2">Tyrosine-protein kinase-like otk</fullName>
    </recommendedName>
    <alternativeName>
        <fullName>Tyrosine-protein kinase-like 7 homolog</fullName>
    </alternativeName>
</protein>
<evidence type="ECO:0000250" key="1"/>
<evidence type="ECO:0000250" key="2">
    <source>
        <dbReference type="UniProtKB" id="Q6AWJ9"/>
    </source>
</evidence>
<evidence type="ECO:0000255" key="3"/>
<evidence type="ECO:0000255" key="4">
    <source>
        <dbReference type="PROSITE-ProRule" id="PRU00114"/>
    </source>
</evidence>
<evidence type="ECO:0000255" key="5">
    <source>
        <dbReference type="PROSITE-ProRule" id="PRU00159"/>
    </source>
</evidence>
<evidence type="ECO:0000256" key="6">
    <source>
        <dbReference type="SAM" id="MobiDB-lite"/>
    </source>
</evidence>
<evidence type="ECO:0000305" key="7"/>
<evidence type="ECO:0000312" key="8">
    <source>
        <dbReference type="EMBL" id="EDW90856.1"/>
    </source>
</evidence>
<dbReference type="EMBL" id="CM000158">
    <property type="protein sequence ID" value="EDW90856.1"/>
    <property type="molecule type" value="Genomic_DNA"/>
</dbReference>
<dbReference type="SMR" id="B4P5Q9"/>
<dbReference type="GlyCosmos" id="B4P5Q9">
    <property type="glycosylation" value="8 sites, No reported glycans"/>
</dbReference>
<dbReference type="EnsemblMetazoa" id="FBtr0260000">
    <property type="protein sequence ID" value="FBpp0258492"/>
    <property type="gene ID" value="FBgn0231151"/>
</dbReference>
<dbReference type="EnsemblMetazoa" id="XM_002091108.3">
    <property type="protein sequence ID" value="XP_002091144.1"/>
    <property type="gene ID" value="LOC6530206"/>
</dbReference>
<dbReference type="GeneID" id="6530206"/>
<dbReference type="KEGG" id="dya:Dyak_GE13482"/>
<dbReference type="CTD" id="36283"/>
<dbReference type="eggNOG" id="KOG1026">
    <property type="taxonomic scope" value="Eukaryota"/>
</dbReference>
<dbReference type="eggNOG" id="KOG4475">
    <property type="taxonomic scope" value="Eukaryota"/>
</dbReference>
<dbReference type="HOGENOM" id="CLU_012268_0_0_1"/>
<dbReference type="OMA" id="SHLHIEA"/>
<dbReference type="OrthoDB" id="2413561at2759"/>
<dbReference type="PhylomeDB" id="B4P5Q9"/>
<dbReference type="ChiTaRS" id="otk">
    <property type="organism name" value="fly"/>
</dbReference>
<dbReference type="Proteomes" id="UP000002282">
    <property type="component" value="Chromosome 2R"/>
</dbReference>
<dbReference type="GO" id="GO:0030424">
    <property type="term" value="C:axon"/>
    <property type="evidence" value="ECO:0007669"/>
    <property type="project" value="EnsemblMetazoa"/>
</dbReference>
<dbReference type="GO" id="GO:0005886">
    <property type="term" value="C:plasma membrane"/>
    <property type="evidence" value="ECO:0000250"/>
    <property type="project" value="UniProtKB"/>
</dbReference>
<dbReference type="GO" id="GO:0043235">
    <property type="term" value="C:receptor complex"/>
    <property type="evidence" value="ECO:0007669"/>
    <property type="project" value="TreeGrafter"/>
</dbReference>
<dbReference type="GO" id="GO:0005524">
    <property type="term" value="F:ATP binding"/>
    <property type="evidence" value="ECO:0007669"/>
    <property type="project" value="InterPro"/>
</dbReference>
<dbReference type="GO" id="GO:0050839">
    <property type="term" value="F:cell adhesion molecule binding"/>
    <property type="evidence" value="ECO:0000250"/>
    <property type="project" value="UniProtKB"/>
</dbReference>
<dbReference type="GO" id="GO:0046982">
    <property type="term" value="F:protein heterodimerization activity"/>
    <property type="evidence" value="ECO:0007669"/>
    <property type="project" value="EnsemblMetazoa"/>
</dbReference>
<dbReference type="GO" id="GO:0042803">
    <property type="term" value="F:protein homodimerization activity"/>
    <property type="evidence" value="ECO:0007669"/>
    <property type="project" value="EnsemblMetazoa"/>
</dbReference>
<dbReference type="GO" id="GO:0004672">
    <property type="term" value="F:protein kinase activity"/>
    <property type="evidence" value="ECO:0000250"/>
    <property type="project" value="UniProtKB"/>
</dbReference>
<dbReference type="GO" id="GO:0038023">
    <property type="term" value="F:signaling receptor activity"/>
    <property type="evidence" value="ECO:0000250"/>
    <property type="project" value="UniProtKB"/>
</dbReference>
<dbReference type="GO" id="GO:0004714">
    <property type="term" value="F:transmembrane receptor protein tyrosine kinase activity"/>
    <property type="evidence" value="ECO:0007669"/>
    <property type="project" value="EnsemblMetazoa"/>
</dbReference>
<dbReference type="GO" id="GO:0017147">
    <property type="term" value="F:Wnt-protein binding"/>
    <property type="evidence" value="ECO:0007669"/>
    <property type="project" value="EnsemblMetazoa"/>
</dbReference>
<dbReference type="GO" id="GO:0007155">
    <property type="term" value="P:cell adhesion"/>
    <property type="evidence" value="ECO:0000250"/>
    <property type="project" value="UniProtKB"/>
</dbReference>
<dbReference type="GO" id="GO:0007169">
    <property type="term" value="P:cell surface receptor protein tyrosine kinase signaling pathway"/>
    <property type="evidence" value="ECO:0007669"/>
    <property type="project" value="TreeGrafter"/>
</dbReference>
<dbReference type="GO" id="GO:0048804">
    <property type="term" value="P:imaginal disc-derived female genitalia morphogenesis"/>
    <property type="evidence" value="ECO:0007669"/>
    <property type="project" value="EnsemblMetazoa"/>
</dbReference>
<dbReference type="GO" id="GO:0048803">
    <property type="term" value="P:imaginal disc-derived male genitalia morphogenesis"/>
    <property type="evidence" value="ECO:0007669"/>
    <property type="project" value="EnsemblMetazoa"/>
</dbReference>
<dbReference type="GO" id="GO:0035260">
    <property type="term" value="P:internal genitalia morphogenesis"/>
    <property type="evidence" value="ECO:0007669"/>
    <property type="project" value="EnsemblMetazoa"/>
</dbReference>
<dbReference type="GO" id="GO:0090090">
    <property type="term" value="P:negative regulation of canonical Wnt signaling pathway"/>
    <property type="evidence" value="ECO:0007669"/>
    <property type="project" value="EnsemblMetazoa"/>
</dbReference>
<dbReference type="GO" id="GO:0072499">
    <property type="term" value="P:photoreceptor cell axon guidance"/>
    <property type="evidence" value="ECO:0007669"/>
    <property type="project" value="EnsemblMetazoa"/>
</dbReference>
<dbReference type="GO" id="GO:0010976">
    <property type="term" value="P:positive regulation of neuron projection development"/>
    <property type="evidence" value="ECO:0007669"/>
    <property type="project" value="TreeGrafter"/>
</dbReference>
<dbReference type="GO" id="GO:0051897">
    <property type="term" value="P:positive regulation of phosphatidylinositol 3-kinase/protein kinase B signal transduction"/>
    <property type="evidence" value="ECO:0007669"/>
    <property type="project" value="TreeGrafter"/>
</dbReference>
<dbReference type="GO" id="GO:0031290">
    <property type="term" value="P:retinal ganglion cell axon guidance"/>
    <property type="evidence" value="ECO:0000250"/>
    <property type="project" value="UniProtKB"/>
</dbReference>
<dbReference type="CDD" id="cd00096">
    <property type="entry name" value="Ig"/>
    <property type="match status" value="2"/>
</dbReference>
<dbReference type="CDD" id="cd05046">
    <property type="entry name" value="PTK_CCK4"/>
    <property type="match status" value="1"/>
</dbReference>
<dbReference type="FunFam" id="1.10.510.10:FF:000954">
    <property type="entry name" value="Tyrosine-protein kinase-like otk"/>
    <property type="match status" value="1"/>
</dbReference>
<dbReference type="FunFam" id="2.60.40.10:FF:001805">
    <property type="entry name" value="Tyrosine-protein kinase-like otk"/>
    <property type="match status" value="1"/>
</dbReference>
<dbReference type="FunFam" id="2.60.40.10:FF:002027">
    <property type="entry name" value="Tyrosine-protein kinase-like otk"/>
    <property type="match status" value="1"/>
</dbReference>
<dbReference type="FunFam" id="2.60.40.10:FF:002086">
    <property type="entry name" value="Tyrosine-protein kinase-like otk"/>
    <property type="match status" value="1"/>
</dbReference>
<dbReference type="FunFam" id="2.60.40.10:FF:002809">
    <property type="entry name" value="Tyrosine-protein kinase-like otk"/>
    <property type="match status" value="1"/>
</dbReference>
<dbReference type="FunFam" id="3.30.200.20:FF:001776">
    <property type="entry name" value="Tyrosine-protein kinase-like otk"/>
    <property type="match status" value="1"/>
</dbReference>
<dbReference type="FunFam" id="2.60.40.10:FF:002127">
    <property type="entry name" value="tyrosine-protein kinase-like otk"/>
    <property type="match status" value="1"/>
</dbReference>
<dbReference type="Gene3D" id="2.60.40.10">
    <property type="entry name" value="Immunoglobulins"/>
    <property type="match status" value="5"/>
</dbReference>
<dbReference type="Gene3D" id="1.10.510.10">
    <property type="entry name" value="Transferase(Phosphotransferase) domain 1"/>
    <property type="match status" value="1"/>
</dbReference>
<dbReference type="InterPro" id="IPR007110">
    <property type="entry name" value="Ig-like_dom"/>
</dbReference>
<dbReference type="InterPro" id="IPR036179">
    <property type="entry name" value="Ig-like_dom_sf"/>
</dbReference>
<dbReference type="InterPro" id="IPR013783">
    <property type="entry name" value="Ig-like_fold"/>
</dbReference>
<dbReference type="InterPro" id="IPR013098">
    <property type="entry name" value="Ig_I-set"/>
</dbReference>
<dbReference type="InterPro" id="IPR003599">
    <property type="entry name" value="Ig_sub"/>
</dbReference>
<dbReference type="InterPro" id="IPR003598">
    <property type="entry name" value="Ig_sub2"/>
</dbReference>
<dbReference type="InterPro" id="IPR011009">
    <property type="entry name" value="Kinase-like_dom_sf"/>
</dbReference>
<dbReference type="InterPro" id="IPR000719">
    <property type="entry name" value="Prot_kinase_dom"/>
</dbReference>
<dbReference type="InterPro" id="IPR050122">
    <property type="entry name" value="RTK"/>
</dbReference>
<dbReference type="InterPro" id="IPR001245">
    <property type="entry name" value="Ser-Thr/Tyr_kinase_cat_dom"/>
</dbReference>
<dbReference type="InterPro" id="IPR008266">
    <property type="entry name" value="Tyr_kinase_AS"/>
</dbReference>
<dbReference type="InterPro" id="IPR020635">
    <property type="entry name" value="Tyr_kinase_cat_dom"/>
</dbReference>
<dbReference type="PANTHER" id="PTHR24416">
    <property type="entry name" value="TYROSINE-PROTEIN KINASE RECEPTOR"/>
    <property type="match status" value="1"/>
</dbReference>
<dbReference type="PANTHER" id="PTHR24416:SF349">
    <property type="entry name" value="TYROSINE-PROTEIN KINASE RYK"/>
    <property type="match status" value="1"/>
</dbReference>
<dbReference type="Pfam" id="PF07679">
    <property type="entry name" value="I-set"/>
    <property type="match status" value="1"/>
</dbReference>
<dbReference type="Pfam" id="PF13927">
    <property type="entry name" value="Ig_3"/>
    <property type="match status" value="3"/>
</dbReference>
<dbReference type="Pfam" id="PF07714">
    <property type="entry name" value="PK_Tyr_Ser-Thr"/>
    <property type="match status" value="1"/>
</dbReference>
<dbReference type="PIRSF" id="PIRSF000615">
    <property type="entry name" value="TyrPK_CSF1-R"/>
    <property type="match status" value="1"/>
</dbReference>
<dbReference type="PRINTS" id="PR00109">
    <property type="entry name" value="TYRKINASE"/>
</dbReference>
<dbReference type="SMART" id="SM00409">
    <property type="entry name" value="IG"/>
    <property type="match status" value="5"/>
</dbReference>
<dbReference type="SMART" id="SM00408">
    <property type="entry name" value="IGc2"/>
    <property type="match status" value="5"/>
</dbReference>
<dbReference type="SMART" id="SM00219">
    <property type="entry name" value="TyrKc"/>
    <property type="match status" value="1"/>
</dbReference>
<dbReference type="SUPFAM" id="SSF48726">
    <property type="entry name" value="Immunoglobulin"/>
    <property type="match status" value="4"/>
</dbReference>
<dbReference type="SUPFAM" id="SSF56112">
    <property type="entry name" value="Protein kinase-like (PK-like)"/>
    <property type="match status" value="1"/>
</dbReference>
<dbReference type="PROSITE" id="PS50835">
    <property type="entry name" value="IG_LIKE"/>
    <property type="match status" value="5"/>
</dbReference>
<dbReference type="PROSITE" id="PS50011">
    <property type="entry name" value="PROTEIN_KINASE_DOM"/>
    <property type="match status" value="1"/>
</dbReference>
<dbReference type="PROSITE" id="PS00109">
    <property type="entry name" value="PROTEIN_KINASE_TYR"/>
    <property type="match status" value="1"/>
</dbReference>
<name>PTK7_DROYA</name>
<proteinExistence type="inferred from homology"/>
<sequence length="1033" mass="114148">MTARMISIYGLVLASMMASVLASSSRFQRLPQSQSVVENESVKFECESTDSYSELHYDWLHNGHRIAYDKRVHQIGSNLHIEAVRRTEDVGSYVCIATNLASGAREASPPAKLSVIYIESASVQLLGSNRNELLLKCHVEGASGDSEPLEIEWYRNSEKLSTWRNVQLDQHRLIVRQPGSDDDGLYRCTASNAAGRVMSKQGYVYQSSVKCLPRLARRKSQKVMESWDKQTFLCRGKRGGAAGLEALPAAPEDLRIVQGPIAQSIIKEGEPTALTCLYELPDELKNQRIQLRWRKDGKLLRQVELGGSAPISGHSFDSGKDALLREDARLVLHKQNGTLSFASIIASDAGQYQCQLQLEAHVPVSSSPGVLEVIEQLKFVPQPTSKNLELDAVVAKVHCKAQGTPTPQVQWVREGENNTLPDQVEVDANGTLIFRNVNSEHRGNYTCLATNTQGQINATVAINVVVTPKFSVPPVGPIETAELGTVVIHCQAIGDPKPTIQWDKDLKYLSENNTDRERFRFLENGTLEIRNVQVEDEGSYGCTIGNSAGLKREDVQLIVKTTGDGFAPEESGGDGFLVTRAVLITMTVALAYIVLVVGLMLWCRYRRQARKARLNDLSTKEAGGDQPDATGNGKGSEQEPCLSKQHNGHSKSRSKSSGDAQKSDDTACSQQSRASKKSAHIYEQLALPRSGLSELIQIGRGEFGDVFVGKLKATLVTSPSDKDADTEKQHSNSENGSGGSGSGSTTLSTLNEKRRSKTSMDDIEEIKEEEQEQHNQSGLEQLVLVKALNKVKDEQACQEFRRQLDLLRAISHKGVVRLFGLCREKDPHYMVLEYTDWGDLKQFLLATAGKVNTATAGSSSPPPLTTSQVLAVAYQIARGMDAIYRARFTHRDLATRNCVISSEFIVKVSYPALCKDKYSREYHKHRNTLLPIRWLAPECIQEDEYTTKSDIFAYGVVVWELFNQATKLPHEELTNEQVVQRSQAGSLEWSVAESTPDSLREILLSCWVANPKERPSFSQLGAALSKAMQSAEK</sequence>
<comment type="function">
    <text evidence="1">Acts as a calcium-dependent, homophilic cell adhesion molecule that regulates neural recognition during the development of the nervous system. Component of the repulsive Plexin signaling response to regulate motor axon guidance at the embryonic stage. Also component of a receptor complex that is required in the adult visual system to innervate the lamina layer; specific targeting of R1-R6 axons (By similarity).</text>
</comment>
<comment type="subunit">
    <text evidence="1">Interacts with plexA; component of a receptor complex that mediates the repulsive signaling in response to Semaphorin ligands.</text>
</comment>
<comment type="subcellular location">
    <subcellularLocation>
        <location evidence="2">Cell membrane</location>
        <topology evidence="2">Single-pass type I membrane protein</topology>
    </subcellularLocation>
</comment>
<comment type="similarity">
    <text evidence="5">Belongs to the protein kinase superfamily. Tyr protein kinase family. Insulin receptor subfamily.</text>
</comment>
<comment type="caution">
    <text evidence="7">The D.melanogaster ortholog of this protein has been proposed to undergo autophosphorylation on tyrosine residues which is induced in response to cell adhesion (PubMed:1371458). However as mammalian orthologs of this protein seem to lack kinase activity it may be that this protein associates with, and is phosphorylated by, an unknown active tyrosine kinase.</text>
</comment>
<feature type="signal peptide" evidence="3">
    <location>
        <begin position="1"/>
        <end position="22"/>
    </location>
</feature>
<feature type="chain" id="PRO_0000388694" description="Tyrosine-protein kinase-like otk" evidence="3">
    <location>
        <begin position="23"/>
        <end position="1033"/>
    </location>
</feature>
<feature type="topological domain" description="Extracellular" evidence="3">
    <location>
        <begin position="23"/>
        <end position="581"/>
    </location>
</feature>
<feature type="transmembrane region" description="Helical" evidence="3">
    <location>
        <begin position="582"/>
        <end position="602"/>
    </location>
</feature>
<feature type="topological domain" description="Cytoplasmic" evidence="3">
    <location>
        <begin position="603"/>
        <end position="1033"/>
    </location>
</feature>
<feature type="domain" description="Ig-like C2-type 1" evidence="3">
    <location>
        <begin position="25"/>
        <end position="114"/>
    </location>
</feature>
<feature type="domain" description="Ig-like C2-type 2" evidence="3">
    <location>
        <begin position="113"/>
        <end position="199"/>
    </location>
</feature>
<feature type="domain" description="Ig-like C2-type 3" evidence="3">
    <location>
        <begin position="251"/>
        <end position="365"/>
    </location>
</feature>
<feature type="domain" description="Ig-like C2-type 4" evidence="3">
    <location>
        <begin position="368"/>
        <end position="463"/>
    </location>
</feature>
<feature type="domain" description="Ig-like C2-type 5" evidence="3">
    <location>
        <begin position="468"/>
        <end position="558"/>
    </location>
</feature>
<feature type="domain" description="Protein kinase; inactive" evidence="5 7">
    <location>
        <begin position="692"/>
        <end position="1028"/>
    </location>
</feature>
<feature type="region of interest" description="Disordered" evidence="6">
    <location>
        <begin position="617"/>
        <end position="679"/>
    </location>
</feature>
<feature type="region of interest" description="Disordered" evidence="6">
    <location>
        <begin position="718"/>
        <end position="760"/>
    </location>
</feature>
<feature type="compositionally biased region" description="Polar residues" evidence="6">
    <location>
        <begin position="655"/>
        <end position="673"/>
    </location>
</feature>
<feature type="compositionally biased region" description="Basic and acidic residues" evidence="6">
    <location>
        <begin position="720"/>
        <end position="731"/>
    </location>
</feature>
<feature type="modified residue" description="Phosphoserine" evidence="2">
    <location>
        <position position="678"/>
    </location>
</feature>
<feature type="glycosylation site" description="N-linked (GlcNAc...) asparagine" evidence="3">
    <location>
        <position position="39"/>
    </location>
</feature>
<feature type="glycosylation site" description="N-linked (GlcNAc...) asparagine" evidence="3">
    <location>
        <position position="336"/>
    </location>
</feature>
<feature type="glycosylation site" description="N-linked (GlcNAc...) asparagine" evidence="3">
    <location>
        <position position="417"/>
    </location>
</feature>
<feature type="glycosylation site" description="N-linked (GlcNAc...) asparagine" evidence="3">
    <location>
        <position position="429"/>
    </location>
</feature>
<feature type="glycosylation site" description="N-linked (GlcNAc...) asparagine" evidence="3">
    <location>
        <position position="444"/>
    </location>
</feature>
<feature type="glycosylation site" description="N-linked (GlcNAc...) asparagine" evidence="3">
    <location>
        <position position="457"/>
    </location>
</feature>
<feature type="glycosylation site" description="N-linked (GlcNAc...) asparagine" evidence="3">
    <location>
        <position position="512"/>
    </location>
</feature>
<feature type="glycosylation site" description="N-linked (GlcNAc...) asparagine" evidence="3">
    <location>
        <position position="524"/>
    </location>
</feature>
<feature type="disulfide bond" evidence="4">
    <location>
        <begin position="46"/>
        <end position="95"/>
    </location>
</feature>
<feature type="disulfide bond" evidence="4">
    <location>
        <begin position="137"/>
        <end position="188"/>
    </location>
</feature>
<feature type="disulfide bond" evidence="4">
    <location>
        <begin position="276"/>
        <end position="354"/>
    </location>
</feature>
<feature type="disulfide bond" evidence="4">
    <location>
        <begin position="399"/>
        <end position="447"/>
    </location>
</feature>
<feature type="disulfide bond" evidence="4">
    <location>
        <begin position="490"/>
        <end position="542"/>
    </location>
</feature>